<protein>
    <recommendedName>
        <fullName>Ubiquitin-conjugating enzyme E2 1</fullName>
        <ecNumber>2.3.2.23</ecNumber>
    </recommendedName>
    <alternativeName>
        <fullName>E2 ubiquitin-conjugating enzyme 1</fullName>
    </alternativeName>
    <alternativeName>
        <fullName>Ubiquitin carrier protein 1</fullName>
    </alternativeName>
    <alternativeName>
        <fullName>Ubiquitin-protein ligase 1</fullName>
    </alternativeName>
</protein>
<dbReference type="EC" id="2.3.2.23"/>
<dbReference type="EMBL" id="CU329671">
    <property type="protein sequence ID" value="CAA21178.2"/>
    <property type="molecule type" value="Genomic_DNA"/>
</dbReference>
<dbReference type="PIR" id="T40123">
    <property type="entry name" value="T40123"/>
</dbReference>
<dbReference type="RefSeq" id="NP_596239.1">
    <property type="nucleotide sequence ID" value="NM_001022159.2"/>
</dbReference>
<dbReference type="SMR" id="O74810"/>
<dbReference type="BioGRID" id="276808">
    <property type="interactions" value="4"/>
</dbReference>
<dbReference type="FunCoup" id="O74810">
    <property type="interactions" value="1099"/>
</dbReference>
<dbReference type="STRING" id="284812.O74810"/>
<dbReference type="iPTMnet" id="O74810"/>
<dbReference type="PaxDb" id="4896-SPBC2D10.20.1"/>
<dbReference type="EnsemblFungi" id="SPBC2D10.20.1">
    <property type="protein sequence ID" value="SPBC2D10.20.1:pep"/>
    <property type="gene ID" value="SPBC2D10.20"/>
</dbReference>
<dbReference type="GeneID" id="2540277"/>
<dbReference type="KEGG" id="spo:2540277"/>
<dbReference type="PomBase" id="SPBC2D10.20">
    <property type="gene designation" value="ubc1"/>
</dbReference>
<dbReference type="VEuPathDB" id="FungiDB:SPBC2D10.20"/>
<dbReference type="eggNOG" id="KOG0418">
    <property type="taxonomic scope" value="Eukaryota"/>
</dbReference>
<dbReference type="HOGENOM" id="CLU_030988_13_1_1"/>
<dbReference type="InParanoid" id="O74810"/>
<dbReference type="OMA" id="THLRGQF"/>
<dbReference type="PhylomeDB" id="O74810"/>
<dbReference type="Reactome" id="R-SPO-8866652">
    <property type="pathway name" value="Synthesis of active ubiquitin: roles of E1 and E2 enzymes"/>
</dbReference>
<dbReference type="Reactome" id="R-SPO-983168">
    <property type="pathway name" value="Antigen processing: Ubiquitination &amp; Proteasome degradation"/>
</dbReference>
<dbReference type="UniPathway" id="UPA00143"/>
<dbReference type="PRO" id="PR:O74810"/>
<dbReference type="Proteomes" id="UP000002485">
    <property type="component" value="Chromosome II"/>
</dbReference>
<dbReference type="GO" id="GO:0005829">
    <property type="term" value="C:cytosol"/>
    <property type="evidence" value="ECO:0007005"/>
    <property type="project" value="PomBase"/>
</dbReference>
<dbReference type="GO" id="GO:0005634">
    <property type="term" value="C:nucleus"/>
    <property type="evidence" value="ECO:0007005"/>
    <property type="project" value="PomBase"/>
</dbReference>
<dbReference type="GO" id="GO:0005524">
    <property type="term" value="F:ATP binding"/>
    <property type="evidence" value="ECO:0007669"/>
    <property type="project" value="UniProtKB-KW"/>
</dbReference>
<dbReference type="GO" id="GO:0061631">
    <property type="term" value="F:ubiquitin conjugating enzyme activity"/>
    <property type="evidence" value="ECO:0000318"/>
    <property type="project" value="GO_Central"/>
</dbReference>
<dbReference type="GO" id="GO:0036503">
    <property type="term" value="P:ERAD pathway"/>
    <property type="evidence" value="ECO:0000266"/>
    <property type="project" value="PomBase"/>
</dbReference>
<dbReference type="GO" id="GO:0000209">
    <property type="term" value="P:protein polyubiquitination"/>
    <property type="evidence" value="ECO:0000318"/>
    <property type="project" value="GO_Central"/>
</dbReference>
<dbReference type="CDD" id="cd23800">
    <property type="entry name" value="UBCc_UBE2K"/>
    <property type="match status" value="1"/>
</dbReference>
<dbReference type="FunFam" id="3.10.110.10:FF:000037">
    <property type="entry name" value="ubiquitin-conjugating enzyme E2 27"/>
    <property type="match status" value="1"/>
</dbReference>
<dbReference type="Gene3D" id="1.10.8.10">
    <property type="entry name" value="DNA helicase RuvA subunit, C-terminal domain"/>
    <property type="match status" value="1"/>
</dbReference>
<dbReference type="Gene3D" id="3.10.110.10">
    <property type="entry name" value="Ubiquitin Conjugating Enzyme"/>
    <property type="match status" value="1"/>
</dbReference>
<dbReference type="InterPro" id="IPR050113">
    <property type="entry name" value="Ub_conjugating_enzyme"/>
</dbReference>
<dbReference type="InterPro" id="IPR015368">
    <property type="entry name" value="UBA_C_fun"/>
</dbReference>
<dbReference type="InterPro" id="IPR000608">
    <property type="entry name" value="UBQ-conjugat_E2_core"/>
</dbReference>
<dbReference type="InterPro" id="IPR023313">
    <property type="entry name" value="UBQ-conjugating_AS"/>
</dbReference>
<dbReference type="InterPro" id="IPR016135">
    <property type="entry name" value="UBQ-conjugating_enzyme/RWD"/>
</dbReference>
<dbReference type="PANTHER" id="PTHR24067">
    <property type="entry name" value="UBIQUITIN-CONJUGATING ENZYME E2"/>
    <property type="match status" value="1"/>
</dbReference>
<dbReference type="Pfam" id="PF09288">
    <property type="entry name" value="UBA_3"/>
    <property type="match status" value="1"/>
</dbReference>
<dbReference type="Pfam" id="PF00179">
    <property type="entry name" value="UQ_con"/>
    <property type="match status" value="1"/>
</dbReference>
<dbReference type="SMART" id="SM00212">
    <property type="entry name" value="UBCc"/>
    <property type="match status" value="1"/>
</dbReference>
<dbReference type="SUPFAM" id="SSF54495">
    <property type="entry name" value="UBC-like"/>
    <property type="match status" value="1"/>
</dbReference>
<dbReference type="PROSITE" id="PS00183">
    <property type="entry name" value="UBC_1"/>
    <property type="match status" value="1"/>
</dbReference>
<dbReference type="PROSITE" id="PS50127">
    <property type="entry name" value="UBC_2"/>
    <property type="match status" value="1"/>
</dbReference>
<feature type="chain" id="PRO_0000310742" description="Ubiquitin-conjugating enzyme E2 1">
    <location>
        <begin position="1"/>
        <end position="217"/>
    </location>
</feature>
<feature type="domain" description="UBC core" evidence="1">
    <location>
        <begin position="4"/>
        <end position="151"/>
    </location>
</feature>
<feature type="active site" description="Glycyl thioester intermediate" evidence="1 2">
    <location>
        <position position="89"/>
    </location>
</feature>
<proteinExistence type="inferred from homology"/>
<gene>
    <name type="primary">ubc1</name>
    <name type="ORF">SPBC2D10.20</name>
</gene>
<organism>
    <name type="scientific">Schizosaccharomyces pombe (strain 972 / ATCC 24843)</name>
    <name type="common">Fission yeast</name>
    <dbReference type="NCBI Taxonomy" id="284812"/>
    <lineage>
        <taxon>Eukaryota</taxon>
        <taxon>Fungi</taxon>
        <taxon>Dikarya</taxon>
        <taxon>Ascomycota</taxon>
        <taxon>Taphrinomycotina</taxon>
        <taxon>Schizosaccharomycetes</taxon>
        <taxon>Schizosaccharomycetales</taxon>
        <taxon>Schizosaccharomycetaceae</taxon>
        <taxon>Schizosaccharomyces</taxon>
    </lineage>
</organism>
<name>UBC1_SCHPO</name>
<evidence type="ECO:0000255" key="1">
    <source>
        <dbReference type="PROSITE-ProRule" id="PRU00388"/>
    </source>
</evidence>
<evidence type="ECO:0000255" key="2">
    <source>
        <dbReference type="PROSITE-ProRule" id="PRU10133"/>
    </source>
</evidence>
<evidence type="ECO:0000269" key="3">
    <source>
    </source>
</evidence>
<reference key="1">
    <citation type="journal article" date="2002" name="Nature">
        <title>The genome sequence of Schizosaccharomyces pombe.</title>
        <authorList>
            <person name="Wood V."/>
            <person name="Gwilliam R."/>
            <person name="Rajandream M.A."/>
            <person name="Lyne M.H."/>
            <person name="Lyne R."/>
            <person name="Stewart A."/>
            <person name="Sgouros J.G."/>
            <person name="Peat N."/>
            <person name="Hayles J."/>
            <person name="Baker S.G."/>
            <person name="Basham D."/>
            <person name="Bowman S."/>
            <person name="Brooks K."/>
            <person name="Brown D."/>
            <person name="Brown S."/>
            <person name="Chillingworth T."/>
            <person name="Churcher C.M."/>
            <person name="Collins M."/>
            <person name="Connor R."/>
            <person name="Cronin A."/>
            <person name="Davis P."/>
            <person name="Feltwell T."/>
            <person name="Fraser A."/>
            <person name="Gentles S."/>
            <person name="Goble A."/>
            <person name="Hamlin N."/>
            <person name="Harris D.E."/>
            <person name="Hidalgo J."/>
            <person name="Hodgson G."/>
            <person name="Holroyd S."/>
            <person name="Hornsby T."/>
            <person name="Howarth S."/>
            <person name="Huckle E.J."/>
            <person name="Hunt S."/>
            <person name="Jagels K."/>
            <person name="James K.D."/>
            <person name="Jones L."/>
            <person name="Jones M."/>
            <person name="Leather S."/>
            <person name="McDonald S."/>
            <person name="McLean J."/>
            <person name="Mooney P."/>
            <person name="Moule S."/>
            <person name="Mungall K.L."/>
            <person name="Murphy L.D."/>
            <person name="Niblett D."/>
            <person name="Odell C."/>
            <person name="Oliver K."/>
            <person name="O'Neil S."/>
            <person name="Pearson D."/>
            <person name="Quail M.A."/>
            <person name="Rabbinowitsch E."/>
            <person name="Rutherford K.M."/>
            <person name="Rutter S."/>
            <person name="Saunders D."/>
            <person name="Seeger K."/>
            <person name="Sharp S."/>
            <person name="Skelton J."/>
            <person name="Simmonds M.N."/>
            <person name="Squares R."/>
            <person name="Squares S."/>
            <person name="Stevens K."/>
            <person name="Taylor K."/>
            <person name="Taylor R.G."/>
            <person name="Tivey A."/>
            <person name="Walsh S.V."/>
            <person name="Warren T."/>
            <person name="Whitehead S."/>
            <person name="Woodward J.R."/>
            <person name="Volckaert G."/>
            <person name="Aert R."/>
            <person name="Robben J."/>
            <person name="Grymonprez B."/>
            <person name="Weltjens I."/>
            <person name="Vanstreels E."/>
            <person name="Rieger M."/>
            <person name="Schaefer M."/>
            <person name="Mueller-Auer S."/>
            <person name="Gabel C."/>
            <person name="Fuchs M."/>
            <person name="Duesterhoeft A."/>
            <person name="Fritzc C."/>
            <person name="Holzer E."/>
            <person name="Moestl D."/>
            <person name="Hilbert H."/>
            <person name="Borzym K."/>
            <person name="Langer I."/>
            <person name="Beck A."/>
            <person name="Lehrach H."/>
            <person name="Reinhardt R."/>
            <person name="Pohl T.M."/>
            <person name="Eger P."/>
            <person name="Zimmermann W."/>
            <person name="Wedler H."/>
            <person name="Wambutt R."/>
            <person name="Purnelle B."/>
            <person name="Goffeau A."/>
            <person name="Cadieu E."/>
            <person name="Dreano S."/>
            <person name="Gloux S."/>
            <person name="Lelaure V."/>
            <person name="Mottier S."/>
            <person name="Galibert F."/>
            <person name="Aves S.J."/>
            <person name="Xiang Z."/>
            <person name="Hunt C."/>
            <person name="Moore K."/>
            <person name="Hurst S.M."/>
            <person name="Lucas M."/>
            <person name="Rochet M."/>
            <person name="Gaillardin C."/>
            <person name="Tallada V.A."/>
            <person name="Garzon A."/>
            <person name="Thode G."/>
            <person name="Daga R.R."/>
            <person name="Cruzado L."/>
            <person name="Jimenez J."/>
            <person name="Sanchez M."/>
            <person name="del Rey F."/>
            <person name="Benito J."/>
            <person name="Dominguez A."/>
            <person name="Revuelta J.L."/>
            <person name="Moreno S."/>
            <person name="Armstrong J."/>
            <person name="Forsburg S.L."/>
            <person name="Cerutti L."/>
            <person name="Lowe T."/>
            <person name="McCombie W.R."/>
            <person name="Paulsen I."/>
            <person name="Potashkin J."/>
            <person name="Shpakovski G.V."/>
            <person name="Ussery D."/>
            <person name="Barrell B.G."/>
            <person name="Nurse P."/>
        </authorList>
    </citation>
    <scope>NUCLEOTIDE SEQUENCE [LARGE SCALE GENOMIC DNA]</scope>
    <source>
        <strain>972 / ATCC 24843</strain>
    </source>
</reference>
<reference key="2">
    <citation type="journal article" date="2006" name="Nat. Biotechnol.">
        <title>ORFeome cloning and global analysis of protein localization in the fission yeast Schizosaccharomyces pombe.</title>
        <authorList>
            <person name="Matsuyama A."/>
            <person name="Arai R."/>
            <person name="Yashiroda Y."/>
            <person name="Shirai A."/>
            <person name="Kamata A."/>
            <person name="Sekido S."/>
            <person name="Kobayashi Y."/>
            <person name="Hashimoto A."/>
            <person name="Hamamoto M."/>
            <person name="Hiraoka Y."/>
            <person name="Horinouchi S."/>
            <person name="Yoshida M."/>
        </authorList>
    </citation>
    <scope>SUBCELLULAR LOCATION [LARGE SCALE ANALYSIS]</scope>
</reference>
<sequence>MSDNRSRRIAKELADVQQDKQAGIQVWTINDDISHLKGMFRGPEGTPYEGGYFVVDIEIPIDYPFRPPKMNFDTKIYHPNVSSQTGAICLDILKDQWSPVYTMKSALISLQSLLCTPEPSNPQDAQVAQVYLQNYQQFVRTAREWTSSYAAAPAGVDLDAENTEFGGIDPNIITNLQQFGFSTELIVRVLQREHIKSQEDLKDYPNGINGILDQLLH</sequence>
<comment type="function">
    <text evidence="1">Catalyzes the covalent attachment of ubiquitin to other proteins. Functions in degradation of misfolded or regulated proteins localized in the endoplasmic reticulum (ER) lumen or membrane via the ubiquitin-proteasome system. Cognate E2 conjugating enzyme for the HRD1 ubiquitin ligase complex, which is part of the ERAD-L and ERAD-M pathways responsible for the rapid degradation of soluble lumenal and membrane proteins with misfolded lumenal domains (ERAD-L), or ER-membrane proteins with misfolded transmembrane domains (ERAD-M).</text>
</comment>
<comment type="catalytic activity">
    <reaction evidence="1 2">
        <text>S-ubiquitinyl-[E1 ubiquitin-activating enzyme]-L-cysteine + [E2 ubiquitin-conjugating enzyme]-L-cysteine = [E1 ubiquitin-activating enzyme]-L-cysteine + S-ubiquitinyl-[E2 ubiquitin-conjugating enzyme]-L-cysteine.</text>
        <dbReference type="EC" id="2.3.2.23"/>
    </reaction>
</comment>
<comment type="pathway">
    <text evidence="1">Protein modification; protein ubiquitination.</text>
</comment>
<comment type="subcellular location">
    <subcellularLocation>
        <location evidence="3">Cytoplasm</location>
    </subcellularLocation>
    <subcellularLocation>
        <location evidence="3">Nucleus</location>
    </subcellularLocation>
</comment>
<comment type="similarity">
    <text evidence="1">Belongs to the ubiquitin-conjugating enzyme family.</text>
</comment>
<accession>O74810</accession>
<keyword id="KW-0067">ATP-binding</keyword>
<keyword id="KW-0963">Cytoplasm</keyword>
<keyword id="KW-0547">Nucleotide-binding</keyword>
<keyword id="KW-0539">Nucleus</keyword>
<keyword id="KW-1185">Reference proteome</keyword>
<keyword id="KW-0808">Transferase</keyword>
<keyword id="KW-0833">Ubl conjugation pathway</keyword>